<sequence>MQLKRVAEAKLPTPWGDFLMVGFEELATGHDHLALIFGDISGDKPVLSRVHSECLTGDALFSLRCDCGFQLEVALTRIAEEGRGVLIYHRQEGRNIGLLNKIRAYALQDLGADTVEANHQLGFAADERDFTLCSDMYKLLGIKAVRLLTNNPKKVEILTQAGINIVERVPLIVGENPKNEHYLATKAAKMGHLLTK</sequence>
<feature type="chain" id="PRO_0000151783" description="GTP cyclohydrolase-2">
    <location>
        <begin position="1"/>
        <end position="196"/>
    </location>
</feature>
<feature type="active site" description="Proton acceptor" evidence="1">
    <location>
        <position position="126"/>
    </location>
</feature>
<feature type="active site" description="Nucleophile" evidence="1">
    <location>
        <position position="128"/>
    </location>
</feature>
<feature type="binding site" evidence="1">
    <location>
        <begin position="49"/>
        <end position="53"/>
    </location>
    <ligand>
        <name>GTP</name>
        <dbReference type="ChEBI" id="CHEBI:37565"/>
    </ligand>
</feature>
<feature type="binding site" evidence="1">
    <location>
        <position position="54"/>
    </location>
    <ligand>
        <name>Zn(2+)</name>
        <dbReference type="ChEBI" id="CHEBI:29105"/>
        <note>catalytic</note>
    </ligand>
</feature>
<feature type="binding site" evidence="1">
    <location>
        <position position="65"/>
    </location>
    <ligand>
        <name>Zn(2+)</name>
        <dbReference type="ChEBI" id="CHEBI:29105"/>
        <note>catalytic</note>
    </ligand>
</feature>
<feature type="binding site" evidence="1">
    <location>
        <position position="67"/>
    </location>
    <ligand>
        <name>Zn(2+)</name>
        <dbReference type="ChEBI" id="CHEBI:29105"/>
        <note>catalytic</note>
    </ligand>
</feature>
<feature type="binding site" evidence="1">
    <location>
        <position position="70"/>
    </location>
    <ligand>
        <name>GTP</name>
        <dbReference type="ChEBI" id="CHEBI:37565"/>
    </ligand>
</feature>
<feature type="binding site" evidence="1">
    <location>
        <begin position="92"/>
        <end position="94"/>
    </location>
    <ligand>
        <name>GTP</name>
        <dbReference type="ChEBI" id="CHEBI:37565"/>
    </ligand>
</feature>
<feature type="binding site" evidence="1">
    <location>
        <position position="114"/>
    </location>
    <ligand>
        <name>GTP</name>
        <dbReference type="ChEBI" id="CHEBI:37565"/>
    </ligand>
</feature>
<feature type="binding site" evidence="1">
    <location>
        <position position="149"/>
    </location>
    <ligand>
        <name>GTP</name>
        <dbReference type="ChEBI" id="CHEBI:37565"/>
    </ligand>
</feature>
<feature type="binding site" evidence="1">
    <location>
        <position position="154"/>
    </location>
    <ligand>
        <name>GTP</name>
        <dbReference type="ChEBI" id="CHEBI:37565"/>
    </ligand>
</feature>
<gene>
    <name evidence="1" type="primary">ribA</name>
    <name type="ordered locus">YPTB2144</name>
</gene>
<proteinExistence type="inferred from homology"/>
<keyword id="KW-0342">GTP-binding</keyword>
<keyword id="KW-0378">Hydrolase</keyword>
<keyword id="KW-0479">Metal-binding</keyword>
<keyword id="KW-0547">Nucleotide-binding</keyword>
<keyword id="KW-0686">Riboflavin biosynthesis</keyword>
<keyword id="KW-0862">Zinc</keyword>
<accession>Q66AI6</accession>
<evidence type="ECO:0000255" key="1">
    <source>
        <dbReference type="HAMAP-Rule" id="MF_00179"/>
    </source>
</evidence>
<reference key="1">
    <citation type="journal article" date="2004" name="Proc. Natl. Acad. Sci. U.S.A.">
        <title>Insights into the evolution of Yersinia pestis through whole-genome comparison with Yersinia pseudotuberculosis.</title>
        <authorList>
            <person name="Chain P.S.G."/>
            <person name="Carniel E."/>
            <person name="Larimer F.W."/>
            <person name="Lamerdin J."/>
            <person name="Stoutland P.O."/>
            <person name="Regala W.M."/>
            <person name="Georgescu A.M."/>
            <person name="Vergez L.M."/>
            <person name="Land M.L."/>
            <person name="Motin V.L."/>
            <person name="Brubaker R.R."/>
            <person name="Fowler J."/>
            <person name="Hinnebusch J."/>
            <person name="Marceau M."/>
            <person name="Medigue C."/>
            <person name="Simonet M."/>
            <person name="Chenal-Francisque V."/>
            <person name="Souza B."/>
            <person name="Dacheux D."/>
            <person name="Elliott J.M."/>
            <person name="Derbise A."/>
            <person name="Hauser L.J."/>
            <person name="Garcia E."/>
        </authorList>
    </citation>
    <scope>NUCLEOTIDE SEQUENCE [LARGE SCALE GENOMIC DNA]</scope>
    <source>
        <strain>IP32953</strain>
    </source>
</reference>
<dbReference type="EC" id="3.5.4.25" evidence="1"/>
<dbReference type="EMBL" id="BX936398">
    <property type="protein sequence ID" value="CAH21382.1"/>
    <property type="molecule type" value="Genomic_DNA"/>
</dbReference>
<dbReference type="RefSeq" id="WP_002227926.1">
    <property type="nucleotide sequence ID" value="NZ_CP009712.1"/>
</dbReference>
<dbReference type="SMR" id="Q66AI6"/>
<dbReference type="GeneID" id="57976446"/>
<dbReference type="KEGG" id="ypo:BZ17_319"/>
<dbReference type="KEGG" id="yps:YPTB2144"/>
<dbReference type="PATRIC" id="fig|273123.14.peg.338"/>
<dbReference type="UniPathway" id="UPA00275">
    <property type="reaction ID" value="UER00400"/>
</dbReference>
<dbReference type="Proteomes" id="UP000001011">
    <property type="component" value="Chromosome"/>
</dbReference>
<dbReference type="GO" id="GO:0005829">
    <property type="term" value="C:cytosol"/>
    <property type="evidence" value="ECO:0007669"/>
    <property type="project" value="TreeGrafter"/>
</dbReference>
<dbReference type="GO" id="GO:0005525">
    <property type="term" value="F:GTP binding"/>
    <property type="evidence" value="ECO:0007669"/>
    <property type="project" value="UniProtKB-KW"/>
</dbReference>
<dbReference type="GO" id="GO:0003935">
    <property type="term" value="F:GTP cyclohydrolase II activity"/>
    <property type="evidence" value="ECO:0007669"/>
    <property type="project" value="UniProtKB-UniRule"/>
</dbReference>
<dbReference type="GO" id="GO:0008270">
    <property type="term" value="F:zinc ion binding"/>
    <property type="evidence" value="ECO:0007669"/>
    <property type="project" value="UniProtKB-UniRule"/>
</dbReference>
<dbReference type="GO" id="GO:0009231">
    <property type="term" value="P:riboflavin biosynthetic process"/>
    <property type="evidence" value="ECO:0007669"/>
    <property type="project" value="UniProtKB-UniRule"/>
</dbReference>
<dbReference type="CDD" id="cd00641">
    <property type="entry name" value="GTP_cyclohydro2"/>
    <property type="match status" value="1"/>
</dbReference>
<dbReference type="FunFam" id="3.40.50.10990:FF:000002">
    <property type="entry name" value="GTP cyclohydrolase-2"/>
    <property type="match status" value="1"/>
</dbReference>
<dbReference type="Gene3D" id="3.40.50.10990">
    <property type="entry name" value="GTP cyclohydrolase II"/>
    <property type="match status" value="1"/>
</dbReference>
<dbReference type="HAMAP" id="MF_00179">
    <property type="entry name" value="RibA"/>
    <property type="match status" value="1"/>
</dbReference>
<dbReference type="InterPro" id="IPR032677">
    <property type="entry name" value="GTP_cyclohydro_II"/>
</dbReference>
<dbReference type="InterPro" id="IPR000926">
    <property type="entry name" value="RibA"/>
</dbReference>
<dbReference type="InterPro" id="IPR036144">
    <property type="entry name" value="RibA-like_sf"/>
</dbReference>
<dbReference type="NCBIfam" id="NF001591">
    <property type="entry name" value="PRK00393.1"/>
    <property type="match status" value="1"/>
</dbReference>
<dbReference type="NCBIfam" id="TIGR00505">
    <property type="entry name" value="ribA"/>
    <property type="match status" value="1"/>
</dbReference>
<dbReference type="PANTHER" id="PTHR21327:SF18">
    <property type="entry name" value="3,4-DIHYDROXY-2-BUTANONE 4-PHOSPHATE SYNTHASE"/>
    <property type="match status" value="1"/>
</dbReference>
<dbReference type="PANTHER" id="PTHR21327">
    <property type="entry name" value="GTP CYCLOHYDROLASE II-RELATED"/>
    <property type="match status" value="1"/>
</dbReference>
<dbReference type="Pfam" id="PF00925">
    <property type="entry name" value="GTP_cyclohydro2"/>
    <property type="match status" value="1"/>
</dbReference>
<dbReference type="SUPFAM" id="SSF142695">
    <property type="entry name" value="RibA-like"/>
    <property type="match status" value="1"/>
</dbReference>
<organism>
    <name type="scientific">Yersinia pseudotuberculosis serotype I (strain IP32953)</name>
    <dbReference type="NCBI Taxonomy" id="273123"/>
    <lineage>
        <taxon>Bacteria</taxon>
        <taxon>Pseudomonadati</taxon>
        <taxon>Pseudomonadota</taxon>
        <taxon>Gammaproteobacteria</taxon>
        <taxon>Enterobacterales</taxon>
        <taxon>Yersiniaceae</taxon>
        <taxon>Yersinia</taxon>
    </lineage>
</organism>
<comment type="function">
    <text evidence="1">Catalyzes the conversion of GTP to 2,5-diamino-6-ribosylamino-4(3H)-pyrimidinone 5'-phosphate (DARP), formate and pyrophosphate.</text>
</comment>
<comment type="catalytic activity">
    <reaction evidence="1">
        <text>GTP + 4 H2O = 2,5-diamino-6-hydroxy-4-(5-phosphoribosylamino)-pyrimidine + formate + 2 phosphate + 3 H(+)</text>
        <dbReference type="Rhea" id="RHEA:23704"/>
        <dbReference type="ChEBI" id="CHEBI:15377"/>
        <dbReference type="ChEBI" id="CHEBI:15378"/>
        <dbReference type="ChEBI" id="CHEBI:15740"/>
        <dbReference type="ChEBI" id="CHEBI:37565"/>
        <dbReference type="ChEBI" id="CHEBI:43474"/>
        <dbReference type="ChEBI" id="CHEBI:58614"/>
        <dbReference type="EC" id="3.5.4.25"/>
    </reaction>
</comment>
<comment type="cofactor">
    <cofactor evidence="1">
        <name>Zn(2+)</name>
        <dbReference type="ChEBI" id="CHEBI:29105"/>
    </cofactor>
    <text evidence="1">Binds 1 zinc ion per subunit.</text>
</comment>
<comment type="pathway">
    <text evidence="1">Cofactor biosynthesis; riboflavin biosynthesis; 5-amino-6-(D-ribitylamino)uracil from GTP: step 1/4.</text>
</comment>
<comment type="subunit">
    <text evidence="1">Homodimer.</text>
</comment>
<comment type="similarity">
    <text evidence="1">Belongs to the GTP cyclohydrolase II family.</text>
</comment>
<protein>
    <recommendedName>
        <fullName evidence="1">GTP cyclohydrolase-2</fullName>
        <ecNumber evidence="1">3.5.4.25</ecNumber>
    </recommendedName>
    <alternativeName>
        <fullName evidence="1">GTP cyclohydrolase II</fullName>
    </alternativeName>
</protein>
<name>RIBA_YERPS</name>